<sequence length="400" mass="44050">MSERVILAYSGGLDTSVAISWIGKETGREVVAVAIDLGQGGEDMDVVRQRALDCGAVEAVVIDARDEFAEDYCLPAIQSNALYMDRYPLVSALSRPLIVKHLVDAAREHKGGIVAHGCTGKGNDQVRFEVGFASLAPDLEVLAPVRDYAWTREKAIAFAEENAIPINVTKRSPFSIDQNVWGRAVETGFLEHLWNAPTKDVYDYTEDPTLNWSTPDEVIVGFDKGVPVSIDGRDVTVLQAIEELNRRAGAQGVGRLDVVEDRLVGIKSREIYEAPGAMVLITAHTELEHVTLERELGRFKRTTDQKWGELVYDGLWFSPLKTALESFVAKTQEHVSGEIRLVLHGGHIAVNGRRSQESLYDFNLATYDEGDTFDQSSAKGFVHVHGLSSSISARRDLGIK</sequence>
<name>ASSY_MYCSS</name>
<organism>
    <name type="scientific">Mycobacterium sp. (strain MCS)</name>
    <dbReference type="NCBI Taxonomy" id="164756"/>
    <lineage>
        <taxon>Bacteria</taxon>
        <taxon>Bacillati</taxon>
        <taxon>Actinomycetota</taxon>
        <taxon>Actinomycetes</taxon>
        <taxon>Mycobacteriales</taxon>
        <taxon>Mycobacteriaceae</taxon>
        <taxon>Mycobacterium</taxon>
    </lineage>
</organism>
<protein>
    <recommendedName>
        <fullName evidence="1">Argininosuccinate synthase</fullName>
        <ecNumber evidence="1">6.3.4.5</ecNumber>
    </recommendedName>
    <alternativeName>
        <fullName evidence="1">Citrulline--aspartate ligase</fullName>
    </alternativeName>
</protein>
<accession>Q1B7R1</accession>
<dbReference type="EC" id="6.3.4.5" evidence="1"/>
<dbReference type="EMBL" id="CP000384">
    <property type="protein sequence ID" value="ABG09073.1"/>
    <property type="molecule type" value="Genomic_DNA"/>
</dbReference>
<dbReference type="SMR" id="Q1B7R1"/>
<dbReference type="KEGG" id="mmc:Mmcs_2966"/>
<dbReference type="HOGENOM" id="CLU_032784_4_2_11"/>
<dbReference type="BioCyc" id="MSP164756:G1G6O-3026-MONOMER"/>
<dbReference type="UniPathway" id="UPA00068">
    <property type="reaction ID" value="UER00113"/>
</dbReference>
<dbReference type="GO" id="GO:0005737">
    <property type="term" value="C:cytoplasm"/>
    <property type="evidence" value="ECO:0007669"/>
    <property type="project" value="UniProtKB-SubCell"/>
</dbReference>
<dbReference type="GO" id="GO:0004055">
    <property type="term" value="F:argininosuccinate synthase activity"/>
    <property type="evidence" value="ECO:0007669"/>
    <property type="project" value="UniProtKB-UniRule"/>
</dbReference>
<dbReference type="GO" id="GO:0005524">
    <property type="term" value="F:ATP binding"/>
    <property type="evidence" value="ECO:0007669"/>
    <property type="project" value="UniProtKB-UniRule"/>
</dbReference>
<dbReference type="GO" id="GO:0000053">
    <property type="term" value="P:argininosuccinate metabolic process"/>
    <property type="evidence" value="ECO:0007669"/>
    <property type="project" value="TreeGrafter"/>
</dbReference>
<dbReference type="GO" id="GO:0006526">
    <property type="term" value="P:L-arginine biosynthetic process"/>
    <property type="evidence" value="ECO:0007669"/>
    <property type="project" value="UniProtKB-UniRule"/>
</dbReference>
<dbReference type="GO" id="GO:0000050">
    <property type="term" value="P:urea cycle"/>
    <property type="evidence" value="ECO:0007669"/>
    <property type="project" value="TreeGrafter"/>
</dbReference>
<dbReference type="CDD" id="cd01999">
    <property type="entry name" value="ASS"/>
    <property type="match status" value="1"/>
</dbReference>
<dbReference type="FunFam" id="3.40.50.620:FF:000038">
    <property type="entry name" value="Argininosuccinate synthase"/>
    <property type="match status" value="1"/>
</dbReference>
<dbReference type="FunFam" id="3.90.1260.10:FF:000006">
    <property type="entry name" value="Argininosuccinate synthase"/>
    <property type="match status" value="1"/>
</dbReference>
<dbReference type="Gene3D" id="3.90.1260.10">
    <property type="entry name" value="Argininosuccinate synthetase, chain A, domain 2"/>
    <property type="match status" value="1"/>
</dbReference>
<dbReference type="Gene3D" id="3.40.50.620">
    <property type="entry name" value="HUPs"/>
    <property type="match status" value="1"/>
</dbReference>
<dbReference type="Gene3D" id="1.20.5.470">
    <property type="entry name" value="Single helix bin"/>
    <property type="match status" value="1"/>
</dbReference>
<dbReference type="HAMAP" id="MF_00005">
    <property type="entry name" value="Arg_succ_synth_type1"/>
    <property type="match status" value="1"/>
</dbReference>
<dbReference type="InterPro" id="IPR048268">
    <property type="entry name" value="Arginosuc_syn_C"/>
</dbReference>
<dbReference type="InterPro" id="IPR048267">
    <property type="entry name" value="Arginosuc_syn_N"/>
</dbReference>
<dbReference type="InterPro" id="IPR001518">
    <property type="entry name" value="Arginosuc_synth"/>
</dbReference>
<dbReference type="InterPro" id="IPR018223">
    <property type="entry name" value="Arginosuc_synth_CS"/>
</dbReference>
<dbReference type="InterPro" id="IPR023434">
    <property type="entry name" value="Arginosuc_synth_type_1_subfam"/>
</dbReference>
<dbReference type="InterPro" id="IPR024074">
    <property type="entry name" value="AS_cat/multimer_dom_body"/>
</dbReference>
<dbReference type="InterPro" id="IPR014729">
    <property type="entry name" value="Rossmann-like_a/b/a_fold"/>
</dbReference>
<dbReference type="NCBIfam" id="TIGR00032">
    <property type="entry name" value="argG"/>
    <property type="match status" value="1"/>
</dbReference>
<dbReference type="NCBIfam" id="NF001770">
    <property type="entry name" value="PRK00509.1"/>
    <property type="match status" value="1"/>
</dbReference>
<dbReference type="PANTHER" id="PTHR11587">
    <property type="entry name" value="ARGININOSUCCINATE SYNTHASE"/>
    <property type="match status" value="1"/>
</dbReference>
<dbReference type="PANTHER" id="PTHR11587:SF2">
    <property type="entry name" value="ARGININOSUCCINATE SYNTHASE"/>
    <property type="match status" value="1"/>
</dbReference>
<dbReference type="Pfam" id="PF20979">
    <property type="entry name" value="Arginosuc_syn_C"/>
    <property type="match status" value="1"/>
</dbReference>
<dbReference type="Pfam" id="PF00764">
    <property type="entry name" value="Arginosuc_synth"/>
    <property type="match status" value="1"/>
</dbReference>
<dbReference type="SUPFAM" id="SSF52402">
    <property type="entry name" value="Adenine nucleotide alpha hydrolases-like"/>
    <property type="match status" value="1"/>
</dbReference>
<dbReference type="SUPFAM" id="SSF69864">
    <property type="entry name" value="Argininosuccinate synthetase, C-terminal domain"/>
    <property type="match status" value="1"/>
</dbReference>
<dbReference type="PROSITE" id="PS00564">
    <property type="entry name" value="ARGININOSUCCIN_SYN_1"/>
    <property type="match status" value="1"/>
</dbReference>
<dbReference type="PROSITE" id="PS00565">
    <property type="entry name" value="ARGININOSUCCIN_SYN_2"/>
    <property type="match status" value="1"/>
</dbReference>
<gene>
    <name evidence="1" type="primary">argG</name>
    <name type="ordered locus">Mmcs_2966</name>
</gene>
<feature type="chain" id="PRO_0000263941" description="Argininosuccinate synthase">
    <location>
        <begin position="1"/>
        <end position="400"/>
    </location>
</feature>
<feature type="binding site" evidence="1">
    <location>
        <begin position="8"/>
        <end position="16"/>
    </location>
    <ligand>
        <name>ATP</name>
        <dbReference type="ChEBI" id="CHEBI:30616"/>
    </ligand>
</feature>
<feature type="binding site" evidence="1">
    <location>
        <position position="87"/>
    </location>
    <ligand>
        <name>L-citrulline</name>
        <dbReference type="ChEBI" id="CHEBI:57743"/>
    </ligand>
</feature>
<feature type="binding site" evidence="1">
    <location>
        <position position="117"/>
    </location>
    <ligand>
        <name>ATP</name>
        <dbReference type="ChEBI" id="CHEBI:30616"/>
    </ligand>
</feature>
<feature type="binding site" evidence="1">
    <location>
        <position position="119"/>
    </location>
    <ligand>
        <name>L-aspartate</name>
        <dbReference type="ChEBI" id="CHEBI:29991"/>
    </ligand>
</feature>
<feature type="binding site" evidence="1">
    <location>
        <position position="123"/>
    </location>
    <ligand>
        <name>L-aspartate</name>
        <dbReference type="ChEBI" id="CHEBI:29991"/>
    </ligand>
</feature>
<feature type="binding site" evidence="1">
    <location>
        <position position="123"/>
    </location>
    <ligand>
        <name>L-citrulline</name>
        <dbReference type="ChEBI" id="CHEBI:57743"/>
    </ligand>
</feature>
<feature type="binding site" evidence="1">
    <location>
        <position position="124"/>
    </location>
    <ligand>
        <name>L-aspartate</name>
        <dbReference type="ChEBI" id="CHEBI:29991"/>
    </ligand>
</feature>
<feature type="binding site" evidence="1">
    <location>
        <position position="127"/>
    </location>
    <ligand>
        <name>L-citrulline</name>
        <dbReference type="ChEBI" id="CHEBI:57743"/>
    </ligand>
</feature>
<feature type="binding site" evidence="1">
    <location>
        <position position="175"/>
    </location>
    <ligand>
        <name>L-citrulline</name>
        <dbReference type="ChEBI" id="CHEBI:57743"/>
    </ligand>
</feature>
<feature type="binding site" evidence="1">
    <location>
        <position position="260"/>
    </location>
    <ligand>
        <name>L-citrulline</name>
        <dbReference type="ChEBI" id="CHEBI:57743"/>
    </ligand>
</feature>
<feature type="binding site" evidence="1">
    <location>
        <position position="272"/>
    </location>
    <ligand>
        <name>L-citrulline</name>
        <dbReference type="ChEBI" id="CHEBI:57743"/>
    </ligand>
</feature>
<keyword id="KW-0028">Amino-acid biosynthesis</keyword>
<keyword id="KW-0055">Arginine biosynthesis</keyword>
<keyword id="KW-0067">ATP-binding</keyword>
<keyword id="KW-0963">Cytoplasm</keyword>
<keyword id="KW-0436">Ligase</keyword>
<keyword id="KW-0547">Nucleotide-binding</keyword>
<comment type="catalytic activity">
    <reaction evidence="1">
        <text>L-citrulline + L-aspartate + ATP = 2-(N(omega)-L-arginino)succinate + AMP + diphosphate + H(+)</text>
        <dbReference type="Rhea" id="RHEA:10932"/>
        <dbReference type="ChEBI" id="CHEBI:15378"/>
        <dbReference type="ChEBI" id="CHEBI:29991"/>
        <dbReference type="ChEBI" id="CHEBI:30616"/>
        <dbReference type="ChEBI" id="CHEBI:33019"/>
        <dbReference type="ChEBI" id="CHEBI:57472"/>
        <dbReference type="ChEBI" id="CHEBI:57743"/>
        <dbReference type="ChEBI" id="CHEBI:456215"/>
        <dbReference type="EC" id="6.3.4.5"/>
    </reaction>
</comment>
<comment type="pathway">
    <text evidence="1">Amino-acid biosynthesis; L-arginine biosynthesis; L-arginine from L-ornithine and carbamoyl phosphate: step 2/3.</text>
</comment>
<comment type="subunit">
    <text evidence="1">Homotetramer.</text>
</comment>
<comment type="subcellular location">
    <subcellularLocation>
        <location evidence="1">Cytoplasm</location>
    </subcellularLocation>
</comment>
<comment type="similarity">
    <text evidence="1">Belongs to the argininosuccinate synthase family. Type 1 subfamily.</text>
</comment>
<proteinExistence type="inferred from homology"/>
<reference key="1">
    <citation type="submission" date="2006-06" db="EMBL/GenBank/DDBJ databases">
        <title>Complete sequence of chromosome of Mycobacterium sp. MCS.</title>
        <authorList>
            <consortium name="US DOE Joint Genome Institute"/>
            <person name="Copeland A."/>
            <person name="Lucas S."/>
            <person name="Lapidus A."/>
            <person name="Barry K."/>
            <person name="Detter J.C."/>
            <person name="Glavina del Rio T."/>
            <person name="Hammon N."/>
            <person name="Israni S."/>
            <person name="Dalin E."/>
            <person name="Tice H."/>
            <person name="Pitluck S."/>
            <person name="Martinez M."/>
            <person name="Schmutz J."/>
            <person name="Larimer F."/>
            <person name="Land M."/>
            <person name="Hauser L."/>
            <person name="Kyrpides N."/>
            <person name="Kim E."/>
            <person name="Miller C.D."/>
            <person name="Hughes J.E."/>
            <person name="Anderson A.J."/>
            <person name="Sims R.C."/>
            <person name="Richardson P."/>
        </authorList>
    </citation>
    <scope>NUCLEOTIDE SEQUENCE [LARGE SCALE GENOMIC DNA]</scope>
    <source>
        <strain>MCS</strain>
    </source>
</reference>
<evidence type="ECO:0000255" key="1">
    <source>
        <dbReference type="HAMAP-Rule" id="MF_00005"/>
    </source>
</evidence>